<keyword id="KW-0027">Amidation</keyword>
<keyword id="KW-0929">Antimicrobial</keyword>
<keyword id="KW-0903">Direct protein sequencing</keyword>
<keyword id="KW-0391">Immunity</keyword>
<keyword id="KW-0399">Innate immunity</keyword>
<keyword id="KW-0472">Membrane</keyword>
<keyword id="KW-0964">Secreted</keyword>
<keyword id="KW-1052">Target cell membrane</keyword>
<keyword id="KW-1053">Target membrane</keyword>
<accession>P0DTK0</accession>
<evidence type="ECO:0000269" key="1">
    <source>
    </source>
</evidence>
<evidence type="ECO:0000303" key="2">
    <source>
    </source>
</evidence>
<evidence type="ECO:0000305" key="3"/>
<evidence type="ECO:0000305" key="4">
    <source>
    </source>
</evidence>
<protein>
    <recommendedName>
        <fullName evidence="2">Communis-AAAA</fullName>
    </recommendedName>
    <component>
        <recommendedName>
            <fullName evidence="2">Communis</fullName>
        </recommendedName>
    </component>
</protein>
<organism>
    <name type="scientific">Chartergellus communis</name>
    <name type="common">Wasp</name>
    <dbReference type="NCBI Taxonomy" id="743411"/>
    <lineage>
        <taxon>Eukaryota</taxon>
        <taxon>Metazoa</taxon>
        <taxon>Ecdysozoa</taxon>
        <taxon>Arthropoda</taxon>
        <taxon>Hexapoda</taxon>
        <taxon>Insecta</taxon>
        <taxon>Pterygota</taxon>
        <taxon>Neoptera</taxon>
        <taxon>Endopterygota</taxon>
        <taxon>Hymenoptera</taxon>
        <taxon>Apocrita</taxon>
        <taxon>Aculeata</taxon>
        <taxon>Vespoidea</taxon>
        <taxon>Vespidae</taxon>
        <taxon>Polistinae</taxon>
        <taxon>Chartergellus</taxon>
    </lineage>
</organism>
<feature type="peptide" id="PRO_0000454973" description="Communis-AAAA" evidence="1">
    <location>
        <begin position="1"/>
        <end position="18"/>
    </location>
</feature>
<feature type="peptide" id="PRO_0000454974" description="Communis" evidence="1">
    <location>
        <begin position="1"/>
        <end position="12"/>
    </location>
</feature>
<feature type="modified residue" description="Isoleucine amide" evidence="1">
    <location>
        <position position="18"/>
    </location>
</feature>
<feature type="unsure residue" description="I or L" evidence="1">
    <location>
        <position position="18"/>
    </location>
</feature>
<name>MAST_CHACK</name>
<sequence>INWKAILGKIGKAAAAVI</sequence>
<dbReference type="GO" id="GO:0005576">
    <property type="term" value="C:extracellular region"/>
    <property type="evidence" value="ECO:0007669"/>
    <property type="project" value="UniProtKB-SubCell"/>
</dbReference>
<dbReference type="GO" id="GO:0016020">
    <property type="term" value="C:membrane"/>
    <property type="evidence" value="ECO:0007669"/>
    <property type="project" value="UniProtKB-KW"/>
</dbReference>
<dbReference type="GO" id="GO:0044218">
    <property type="term" value="C:other organism cell membrane"/>
    <property type="evidence" value="ECO:0007669"/>
    <property type="project" value="UniProtKB-KW"/>
</dbReference>
<dbReference type="GO" id="GO:0045087">
    <property type="term" value="P:innate immune response"/>
    <property type="evidence" value="ECO:0007669"/>
    <property type="project" value="UniProtKB-KW"/>
</dbReference>
<comment type="function">
    <molecule>Communis-AAAA</molecule>
    <text evidence="1 3">Probable antimicrobial peptide (Probable). Shows a potent hemolytic activity (EC(50)=142.6 uM). In vivo, its highest dose (2 nmol/animal) induces hyperalgesia in mice. In contrast to Communis peptide, does not induce edema (PubMed:28754346).</text>
</comment>
<comment type="function">
    <molecule>Communis</molecule>
    <text evidence="1">In vivo, is able to induce edema but does not present hemolytic or hyperalgesic activity.</text>
</comment>
<comment type="subcellular location">
    <molecule>Communis-AAAA</molecule>
    <subcellularLocation>
        <location evidence="1">Secreted</location>
    </subcellularLocation>
    <subcellularLocation>
        <location evidence="3">Target cell membrane</location>
    </subcellularLocation>
    <text evidence="4">Forms an alpha-helice.</text>
</comment>
<comment type="subcellular location">
    <molecule>Communis</molecule>
    <subcellularLocation>
        <location evidence="1">Secreted</location>
    </subcellularLocation>
    <subcellularLocation>
        <location evidence="3">Target cell membrane</location>
    </subcellularLocation>
    <text evidence="4">Forms an alpha-helice, which probably inserts into the membrane.</text>
</comment>
<comment type="tissue specificity">
    <text evidence="4">Expressed by the venom gland.</text>
</comment>
<comment type="mass spectrometry">
    <molecule>Communis-AAAA</molecule>
</comment>
<comment type="mass spectrometry">
    <molecule>Communis</molecule>
</comment>
<comment type="similarity">
    <text evidence="3">Belongs to the MCD family. Mastoparan subfamily.</text>
</comment>
<proteinExistence type="evidence at protein level"/>
<reference key="1">
    <citation type="journal article" date="2017" name="Peptides">
        <title>Characterization of two peptides isolated from the venom of social wasp Chartergellus communis (Hymenoptera: Vespidae): influence of multiple alanine residues and C-terminal amidation on biological effects.</title>
        <authorList>
            <person name="Lopes K.S."/>
            <person name="Campos G.A.A."/>
            <person name="Camargo L.C."/>
            <person name="de Souza A.C.B."/>
            <person name="Ibituruna B.V."/>
            <person name="Magalhaes A.C.M."/>
            <person name="da Rocha L.F."/>
            <person name="Garcia A.B."/>
            <person name="Rodrigues M.C."/>
            <person name="Ribeiro D.M."/>
            <person name="Costa M.C."/>
            <person name="Lopez M.H.M."/>
            <person name="Nolli L.M."/>
            <person name="Zamudio-Zuniga F."/>
            <person name="Possani L.D."/>
            <person name="Schwartz E.F."/>
            <person name="Mortari M.R."/>
        </authorList>
    </citation>
    <scope>PROTEIN SEQUENCE</scope>
    <scope>FUNCTION</scope>
    <scope>BIOASSAY</scope>
    <scope>SUBCELLULAR LOCATION</scope>
    <scope>MASS SPECTROMETRY</scope>
    <scope>AMIDATION AT ILE-18</scope>
    <scope>3D-STRUCTURE MODELING</scope>
    <source>
        <tissue>Venom</tissue>
    </source>
</reference>